<feature type="chain" id="PRO_0000176494" description="Asparagine--tRNA ligase, cytoplasmic">
    <location>
        <begin position="1"/>
        <end position="548"/>
    </location>
</feature>
<feature type="region of interest" description="Region of immunological reactivity">
    <location>
        <begin position="81"/>
        <end position="131"/>
    </location>
</feature>
<feature type="sequence conflict" description="In Ref. 2; AAA27849." evidence="2" ref="2">
    <original>I</original>
    <variation>V</variation>
    <location>
        <position position="50"/>
    </location>
</feature>
<feature type="sequence conflict" description="In Ref. 2; AAA27849." evidence="2" ref="2">
    <original>H</original>
    <variation>R</variation>
    <location>
        <position position="65"/>
    </location>
</feature>
<feature type="sequence conflict" description="In Ref. 2; AAA27849." evidence="2" ref="2">
    <original>P</original>
    <variation>S</variation>
    <location>
        <position position="212"/>
    </location>
</feature>
<feature type="sequence conflict" description="In Ref. 2; AAA27849." evidence="2" ref="2">
    <original>L</original>
    <variation>V</variation>
    <location>
        <position position="265"/>
    </location>
</feature>
<feature type="sequence conflict" description="In Ref. 2; AAA27849." evidence="2" ref="2">
    <original>Q</original>
    <variation>K</variation>
    <location>
        <position position="454"/>
    </location>
</feature>
<feature type="strand" evidence="3">
    <location>
        <begin position="3"/>
        <end position="5"/>
    </location>
</feature>
<feature type="turn" evidence="3">
    <location>
        <begin position="7"/>
        <end position="9"/>
    </location>
</feature>
<feature type="strand" evidence="3">
    <location>
        <begin position="17"/>
        <end position="20"/>
    </location>
</feature>
<feature type="helix" evidence="3">
    <location>
        <begin position="25"/>
        <end position="32"/>
    </location>
</feature>
<feature type="strand" evidence="3">
    <location>
        <begin position="35"/>
        <end position="37"/>
    </location>
</feature>
<feature type="strand" evidence="3">
    <location>
        <begin position="39"/>
        <end position="45"/>
    </location>
</feature>
<feature type="strand" evidence="3">
    <location>
        <begin position="48"/>
        <end position="53"/>
    </location>
</feature>
<feature type="helix" evidence="3">
    <location>
        <begin position="56"/>
        <end position="72"/>
    </location>
</feature>
<sequence length="548" mass="62339">MTVYICPETGDDGNDGSELKPLRTLYQAMIITKSSKGDFLIRTKKDGKQIWEAASKTALKKSWKHYEQEMLKNEKVAAKMLEKDATEVGVKAALEEAKKVQIELDTSLSYITGVKIRDLVKHRNERVCIKGWIHRMRRQGKSLMFFILRDGTGFLQVLLMDKLCQTYDALTVNTECTVEIYGAIKEVPEGKEAPNGHELIADFWKIIGNAPPGGIDNVLNEEASVDKMLDNRHLVIRGENAAALLRLRAAATRAMREHFYNAGYLEVAPPTLVQTQVEGGSTLFNLDYFGEQSFLTQSSQLYLETCIPTLGDVFLHCSVLQGGKISHSSTLAEYAHVEAECPFITLDDLMEKIEELVCDTVDRLLADEEAKKLLEHINPKFQPPERPFLRMEYKDAIKWLQEHNVENEFGNTFTYGEDIAEAAERFMTDTINKPILLNRFPSEIKAFYMQRDAQDNTLTESVDLLMPGVGEIVGGSMRIWKFDELSKAFKNVEIDPKPYYWYLDQRLYGTCPHGGYGLGLERFICWLTNTNHIRDVCLYPRFVGRCVP</sequence>
<evidence type="ECO:0000269" key="1">
    <source>
    </source>
</evidence>
<evidence type="ECO:0000305" key="2"/>
<evidence type="ECO:0007829" key="3">
    <source>
        <dbReference type="PDB" id="2KQR"/>
    </source>
</evidence>
<comment type="function">
    <text evidence="1">Potentially protective antigen in lymphatic filariasis.</text>
</comment>
<comment type="catalytic activity">
    <reaction>
        <text>tRNA(Asn) + L-asparagine + ATP = L-asparaginyl-tRNA(Asn) + AMP + diphosphate + H(+)</text>
        <dbReference type="Rhea" id="RHEA:11180"/>
        <dbReference type="Rhea" id="RHEA-COMP:9659"/>
        <dbReference type="Rhea" id="RHEA-COMP:9674"/>
        <dbReference type="ChEBI" id="CHEBI:15378"/>
        <dbReference type="ChEBI" id="CHEBI:30616"/>
        <dbReference type="ChEBI" id="CHEBI:33019"/>
        <dbReference type="ChEBI" id="CHEBI:58048"/>
        <dbReference type="ChEBI" id="CHEBI:78442"/>
        <dbReference type="ChEBI" id="CHEBI:78515"/>
        <dbReference type="ChEBI" id="CHEBI:456215"/>
        <dbReference type="EC" id="6.1.1.22"/>
    </reaction>
</comment>
<comment type="subcellular location">
    <subcellularLocation>
        <location evidence="2">Cytoplasm</location>
    </subcellularLocation>
</comment>
<comment type="similarity">
    <text evidence="2">Belongs to the class-II aminoacyl-tRNA synthetase family.</text>
</comment>
<name>SYNC_BRUMA</name>
<dbReference type="EC" id="6.1.1.22"/>
<dbReference type="EMBL" id="J03971">
    <property type="protein sequence ID" value="AAA27852.1"/>
    <property type="molecule type" value="Genomic_DNA"/>
</dbReference>
<dbReference type="EMBL" id="J03266">
    <property type="protein sequence ID" value="AAA27849.1"/>
    <property type="molecule type" value="mRNA"/>
</dbReference>
<dbReference type="PIR" id="A28209">
    <property type="entry name" value="A28209"/>
</dbReference>
<dbReference type="PIR" id="A54510">
    <property type="entry name" value="A54510"/>
</dbReference>
<dbReference type="PDB" id="2KQR">
    <property type="method" value="NMR"/>
    <property type="chains" value="A=1-111"/>
</dbReference>
<dbReference type="PDBsum" id="2KQR"/>
<dbReference type="BMRB" id="P10723"/>
<dbReference type="SMR" id="P10723"/>
<dbReference type="FunCoup" id="P10723">
    <property type="interactions" value="2242"/>
</dbReference>
<dbReference type="STRING" id="6279.P10723"/>
<dbReference type="InParanoid" id="P10723"/>
<dbReference type="BRENDA" id="6.1.1.22">
    <property type="organism ID" value="997"/>
</dbReference>
<dbReference type="EvolutionaryTrace" id="P10723"/>
<dbReference type="Proteomes" id="UP000006672">
    <property type="component" value="Unassembled WGS sequence"/>
</dbReference>
<dbReference type="GO" id="GO:0005737">
    <property type="term" value="C:cytoplasm"/>
    <property type="evidence" value="ECO:0007669"/>
    <property type="project" value="UniProtKB-SubCell"/>
</dbReference>
<dbReference type="GO" id="GO:0004816">
    <property type="term" value="F:asparagine-tRNA ligase activity"/>
    <property type="evidence" value="ECO:0007669"/>
    <property type="project" value="UniProtKB-EC"/>
</dbReference>
<dbReference type="GO" id="GO:0005524">
    <property type="term" value="F:ATP binding"/>
    <property type="evidence" value="ECO:0007669"/>
    <property type="project" value="UniProtKB-KW"/>
</dbReference>
<dbReference type="GO" id="GO:0003676">
    <property type="term" value="F:nucleic acid binding"/>
    <property type="evidence" value="ECO:0007669"/>
    <property type="project" value="InterPro"/>
</dbReference>
<dbReference type="GO" id="GO:0006421">
    <property type="term" value="P:asparaginyl-tRNA aminoacylation"/>
    <property type="evidence" value="ECO:0007669"/>
    <property type="project" value="InterPro"/>
</dbReference>
<dbReference type="CDD" id="cd04323">
    <property type="entry name" value="AsnRS_cyto_like_N"/>
    <property type="match status" value="1"/>
</dbReference>
<dbReference type="FunFam" id="3.30.930.10:FF:000040">
    <property type="entry name" value="Asparagine--tRNA ligase, cytoplasmic"/>
    <property type="match status" value="1"/>
</dbReference>
<dbReference type="Gene3D" id="3.30.1910.20">
    <property type="entry name" value="asparaginyl-tRNA synthetase, N-terminal domain"/>
    <property type="match status" value="1"/>
</dbReference>
<dbReference type="Gene3D" id="3.30.930.10">
    <property type="entry name" value="Bira Bifunctional Protein, Domain 2"/>
    <property type="match status" value="1"/>
</dbReference>
<dbReference type="Gene3D" id="2.40.50.140">
    <property type="entry name" value="Nucleic acid-binding proteins"/>
    <property type="match status" value="1"/>
</dbReference>
<dbReference type="InterPro" id="IPR004364">
    <property type="entry name" value="Aa-tRNA-synt_II"/>
</dbReference>
<dbReference type="InterPro" id="IPR006195">
    <property type="entry name" value="aa-tRNA-synth_II"/>
</dbReference>
<dbReference type="InterPro" id="IPR045864">
    <property type="entry name" value="aa-tRNA-synth_II/BPL/LPL"/>
</dbReference>
<dbReference type="InterPro" id="IPR004522">
    <property type="entry name" value="Asn-tRNA-ligase"/>
</dbReference>
<dbReference type="InterPro" id="IPR048952">
    <property type="entry name" value="AsnRS_N"/>
</dbReference>
<dbReference type="InterPro" id="IPR002312">
    <property type="entry name" value="Asp/Asn-tRNA-synth_IIb"/>
</dbReference>
<dbReference type="InterPro" id="IPR012340">
    <property type="entry name" value="NA-bd_OB-fold"/>
</dbReference>
<dbReference type="InterPro" id="IPR004365">
    <property type="entry name" value="NA-bd_OB_tRNA"/>
</dbReference>
<dbReference type="NCBIfam" id="TIGR00457">
    <property type="entry name" value="asnS"/>
    <property type="match status" value="1"/>
</dbReference>
<dbReference type="PANTHER" id="PTHR22594:SF16">
    <property type="entry name" value="ASPARAGINE--TRNA LIGASE, CYTOPLASMIC"/>
    <property type="match status" value="1"/>
</dbReference>
<dbReference type="PANTHER" id="PTHR22594">
    <property type="entry name" value="ASPARTYL/LYSYL-TRNA SYNTHETASE"/>
    <property type="match status" value="1"/>
</dbReference>
<dbReference type="Pfam" id="PF20917">
    <property type="entry name" value="AsnRS_N"/>
    <property type="match status" value="1"/>
</dbReference>
<dbReference type="Pfam" id="PF00152">
    <property type="entry name" value="tRNA-synt_2"/>
    <property type="match status" value="1"/>
</dbReference>
<dbReference type="Pfam" id="PF01336">
    <property type="entry name" value="tRNA_anti-codon"/>
    <property type="match status" value="1"/>
</dbReference>
<dbReference type="PRINTS" id="PR01042">
    <property type="entry name" value="TRNASYNTHASP"/>
</dbReference>
<dbReference type="SUPFAM" id="SSF55681">
    <property type="entry name" value="Class II aaRS and biotin synthetases"/>
    <property type="match status" value="1"/>
</dbReference>
<dbReference type="SUPFAM" id="SSF50249">
    <property type="entry name" value="Nucleic acid-binding proteins"/>
    <property type="match status" value="1"/>
</dbReference>
<dbReference type="PROSITE" id="PS50862">
    <property type="entry name" value="AA_TRNA_LIGASE_II"/>
    <property type="match status" value="1"/>
</dbReference>
<accession>P10723</accession>
<protein>
    <recommendedName>
        <fullName>Asparagine--tRNA ligase, cytoplasmic</fullName>
        <ecNumber>6.1.1.22</ecNumber>
    </recommendedName>
    <alternativeName>
        <fullName>Asparaginyl-tRNA synthetase</fullName>
        <shortName>AsnRS</shortName>
    </alternativeName>
    <alternativeName>
        <fullName>Potentially protective 63 kDa antigen</fullName>
    </alternativeName>
</protein>
<reference key="1">
    <citation type="journal article" date="1988" name="Mol. Biochem. Parasitol.">
        <title>A multi-copy gene encodes a potentially protective antigen in Brugia malayi.</title>
        <authorList>
            <person name="Perrine K.G."/>
            <person name="Denker J.A."/>
            <person name="Nilsen T.W."/>
        </authorList>
    </citation>
    <scope>NUCLEOTIDE SEQUENCE [GENOMIC DNA]</scope>
</reference>
<reference key="2">
    <citation type="journal article" date="1988" name="Proc. Natl. Acad. Sci. U.S.A.">
        <title>Cloning and characterization of a potentially protective antigen in lymphatic filariasis.</title>
        <authorList>
            <person name="Nilsen T.W."/>
            <person name="Maroney P.A."/>
            <person name="Goodwin R.G."/>
            <person name="Perrine K.G."/>
            <person name="Denker J.A."/>
            <person name="Nanduri J."/>
            <person name="Kazura J.W."/>
        </authorList>
    </citation>
    <scope>NUCLEOTIDE SEQUENCE [MRNA]</scope>
</reference>
<reference key="3">
    <citation type="journal article" date="1995" name="FEBS Lett.">
        <title>An immunodominant antigen of Brugia malayi is an asparaginyl-tRNA synthetase.</title>
        <authorList>
            <person name="Kron M."/>
            <person name="Marquard K."/>
            <person name="Hartlein M."/>
            <person name="Price S."/>
            <person name="Leberman R."/>
        </authorList>
    </citation>
    <scope>FUNCTION</scope>
</reference>
<proteinExistence type="evidence at protein level"/>
<organism>
    <name type="scientific">Brugia malayi</name>
    <name type="common">Filarial nematode worm</name>
    <dbReference type="NCBI Taxonomy" id="6279"/>
    <lineage>
        <taxon>Eukaryota</taxon>
        <taxon>Metazoa</taxon>
        <taxon>Ecdysozoa</taxon>
        <taxon>Nematoda</taxon>
        <taxon>Chromadorea</taxon>
        <taxon>Rhabditida</taxon>
        <taxon>Spirurina</taxon>
        <taxon>Spiruromorpha</taxon>
        <taxon>Filarioidea</taxon>
        <taxon>Onchocercidae</taxon>
        <taxon>Brugia</taxon>
    </lineage>
</organism>
<keyword id="KW-0002">3D-structure</keyword>
<keyword id="KW-0030">Aminoacyl-tRNA synthetase</keyword>
<keyword id="KW-0067">ATP-binding</keyword>
<keyword id="KW-0963">Cytoplasm</keyword>
<keyword id="KW-0436">Ligase</keyword>
<keyword id="KW-0547">Nucleotide-binding</keyword>
<keyword id="KW-0648">Protein biosynthesis</keyword>
<keyword id="KW-1185">Reference proteome</keyword>